<reference key="1">
    <citation type="journal article" date="2007" name="Proc. Natl. Acad. Sci. U.S.A.">
        <title>Genome plasticity of BCG and impact on vaccine efficacy.</title>
        <authorList>
            <person name="Brosch R."/>
            <person name="Gordon S.V."/>
            <person name="Garnier T."/>
            <person name="Eiglmeier K."/>
            <person name="Frigui W."/>
            <person name="Valenti P."/>
            <person name="Dos Santos S."/>
            <person name="Duthoy S."/>
            <person name="Lacroix C."/>
            <person name="Garcia-Pelayo C."/>
            <person name="Inwald J.K."/>
            <person name="Golby P."/>
            <person name="Garcia J.N."/>
            <person name="Hewinson R.G."/>
            <person name="Behr M.A."/>
            <person name="Quail M.A."/>
            <person name="Churcher C."/>
            <person name="Barrell B.G."/>
            <person name="Parkhill J."/>
            <person name="Cole S.T."/>
        </authorList>
    </citation>
    <scope>NUCLEOTIDE SEQUENCE [LARGE SCALE GENOMIC DNA]</scope>
    <source>
        <strain>BCG / Pasteur 1173P2</strain>
    </source>
</reference>
<proteinExistence type="inferred from homology"/>
<comment type="function">
    <text evidence="1">Catalyzes the dephosphorylation of undecaprenyl diphosphate (UPP). Confers resistance to bacitracin.</text>
</comment>
<comment type="catalytic activity">
    <reaction evidence="1">
        <text>di-trans,octa-cis-undecaprenyl diphosphate + H2O = di-trans,octa-cis-undecaprenyl phosphate + phosphate + H(+)</text>
        <dbReference type="Rhea" id="RHEA:28094"/>
        <dbReference type="ChEBI" id="CHEBI:15377"/>
        <dbReference type="ChEBI" id="CHEBI:15378"/>
        <dbReference type="ChEBI" id="CHEBI:43474"/>
        <dbReference type="ChEBI" id="CHEBI:58405"/>
        <dbReference type="ChEBI" id="CHEBI:60392"/>
        <dbReference type="EC" id="3.6.1.27"/>
    </reaction>
</comment>
<comment type="subcellular location">
    <subcellularLocation>
        <location evidence="1">Cell membrane</location>
        <topology evidence="1">Multi-pass membrane protein</topology>
    </subcellularLocation>
</comment>
<comment type="miscellaneous">
    <text>Bacitracin is thought to be involved in the inhibition of peptidoglycan synthesis by sequestering undecaprenyl diphosphate, thereby reducing the pool of lipid carrier available.</text>
</comment>
<comment type="similarity">
    <text evidence="1">Belongs to the UppP family.</text>
</comment>
<evidence type="ECO:0000255" key="1">
    <source>
        <dbReference type="HAMAP-Rule" id="MF_01006"/>
    </source>
</evidence>
<accession>A1KKH9</accession>
<protein>
    <recommendedName>
        <fullName evidence="1">Undecaprenyl-diphosphatase</fullName>
        <ecNumber evidence="1">3.6.1.27</ecNumber>
    </recommendedName>
    <alternativeName>
        <fullName evidence="1">Bacitracin resistance protein</fullName>
    </alternativeName>
    <alternativeName>
        <fullName evidence="1">Undecaprenyl pyrophosphate phosphatase</fullName>
    </alternativeName>
</protein>
<organism>
    <name type="scientific">Mycobacterium bovis (strain BCG / Pasteur 1173P2)</name>
    <dbReference type="NCBI Taxonomy" id="410289"/>
    <lineage>
        <taxon>Bacteria</taxon>
        <taxon>Bacillati</taxon>
        <taxon>Actinomycetota</taxon>
        <taxon>Actinomycetes</taxon>
        <taxon>Mycobacteriales</taxon>
        <taxon>Mycobacteriaceae</taxon>
        <taxon>Mycobacterium</taxon>
        <taxon>Mycobacterium tuberculosis complex</taxon>
    </lineage>
</organism>
<gene>
    <name evidence="1" type="primary">uppP</name>
    <name type="ordered locus">BCG_2153c</name>
</gene>
<dbReference type="EC" id="3.6.1.27" evidence="1"/>
<dbReference type="EMBL" id="AM408590">
    <property type="protein sequence ID" value="CAL72141.1"/>
    <property type="molecule type" value="Genomic_DNA"/>
</dbReference>
<dbReference type="RefSeq" id="WP_003411105.1">
    <property type="nucleotide sequence ID" value="NC_008769.1"/>
</dbReference>
<dbReference type="SMR" id="A1KKH9"/>
<dbReference type="KEGG" id="mbb:BCG_2153c"/>
<dbReference type="HOGENOM" id="CLU_060296_1_0_11"/>
<dbReference type="Proteomes" id="UP000001472">
    <property type="component" value="Chromosome"/>
</dbReference>
<dbReference type="GO" id="GO:0005886">
    <property type="term" value="C:plasma membrane"/>
    <property type="evidence" value="ECO:0007669"/>
    <property type="project" value="UniProtKB-SubCell"/>
</dbReference>
<dbReference type="GO" id="GO:0050380">
    <property type="term" value="F:undecaprenyl-diphosphatase activity"/>
    <property type="evidence" value="ECO:0007669"/>
    <property type="project" value="UniProtKB-UniRule"/>
</dbReference>
<dbReference type="GO" id="GO:0071555">
    <property type="term" value="P:cell wall organization"/>
    <property type="evidence" value="ECO:0007669"/>
    <property type="project" value="UniProtKB-KW"/>
</dbReference>
<dbReference type="GO" id="GO:0009252">
    <property type="term" value="P:peptidoglycan biosynthetic process"/>
    <property type="evidence" value="ECO:0007669"/>
    <property type="project" value="UniProtKB-KW"/>
</dbReference>
<dbReference type="GO" id="GO:0008360">
    <property type="term" value="P:regulation of cell shape"/>
    <property type="evidence" value="ECO:0007669"/>
    <property type="project" value="UniProtKB-KW"/>
</dbReference>
<dbReference type="GO" id="GO:0046677">
    <property type="term" value="P:response to antibiotic"/>
    <property type="evidence" value="ECO:0007669"/>
    <property type="project" value="UniProtKB-UniRule"/>
</dbReference>
<dbReference type="HAMAP" id="MF_01006">
    <property type="entry name" value="Undec_diphosphatase"/>
    <property type="match status" value="1"/>
</dbReference>
<dbReference type="InterPro" id="IPR003824">
    <property type="entry name" value="UppP"/>
</dbReference>
<dbReference type="NCBIfam" id="NF001392">
    <property type="entry name" value="PRK00281.2-1"/>
    <property type="match status" value="1"/>
</dbReference>
<dbReference type="NCBIfam" id="TIGR00753">
    <property type="entry name" value="undec_PP_bacA"/>
    <property type="match status" value="1"/>
</dbReference>
<dbReference type="PANTHER" id="PTHR30622">
    <property type="entry name" value="UNDECAPRENYL-DIPHOSPHATASE"/>
    <property type="match status" value="1"/>
</dbReference>
<dbReference type="PANTHER" id="PTHR30622:SF4">
    <property type="entry name" value="UNDECAPRENYL-DIPHOSPHATASE"/>
    <property type="match status" value="1"/>
</dbReference>
<dbReference type="Pfam" id="PF02673">
    <property type="entry name" value="BacA"/>
    <property type="match status" value="1"/>
</dbReference>
<sequence length="276" mass="29733">MSWWQVIVLAAAQGLTEFLPVSSSGHLAIVSRIFFSGDAGASFTAVSQLGTEAAVVIYFARDIVRILSAWLHGLVVKAHRNTDYRLGWYVIIGTIPICILGLFFKDDIRSGVRNLWVVVTALVVFSGVIALAEYVGRQSRHIERLTWRDAVVVGIAQTLALVPGVSRSGSTISAGLFLGLDRELAARFGFLLAIPAVFASGLFSLPDAFHPVTEGMSATGPQLLVATLIAFVLGLTAVAWLLRFLVRHNMYWFVGYRVLVGTGMLVLLATGTVAAT</sequence>
<keyword id="KW-0046">Antibiotic resistance</keyword>
<keyword id="KW-1003">Cell membrane</keyword>
<keyword id="KW-0133">Cell shape</keyword>
<keyword id="KW-0961">Cell wall biogenesis/degradation</keyword>
<keyword id="KW-0378">Hydrolase</keyword>
<keyword id="KW-0472">Membrane</keyword>
<keyword id="KW-0573">Peptidoglycan synthesis</keyword>
<keyword id="KW-0812">Transmembrane</keyword>
<keyword id="KW-1133">Transmembrane helix</keyword>
<feature type="chain" id="PRO_0000290729" description="Undecaprenyl-diphosphatase">
    <location>
        <begin position="1"/>
        <end position="276"/>
    </location>
</feature>
<feature type="transmembrane region" description="Helical" evidence="1">
    <location>
        <begin position="84"/>
        <end position="104"/>
    </location>
</feature>
<feature type="transmembrane region" description="Helical" evidence="1">
    <location>
        <begin position="115"/>
        <end position="135"/>
    </location>
</feature>
<feature type="transmembrane region" description="Helical" evidence="1">
    <location>
        <begin position="188"/>
        <end position="208"/>
    </location>
</feature>
<feature type="transmembrane region" description="Helical" evidence="1">
    <location>
        <begin position="222"/>
        <end position="242"/>
    </location>
</feature>
<feature type="transmembrane region" description="Helical" evidence="1">
    <location>
        <begin position="250"/>
        <end position="270"/>
    </location>
</feature>
<name>UPPP_MYCBP</name>